<name>VF84_ASFM2</name>
<organismHost>
    <name type="scientific">Ornithodoros</name>
    <name type="common">relapsing fever ticks</name>
    <dbReference type="NCBI Taxonomy" id="6937"/>
</organismHost>
<organismHost>
    <name type="scientific">Phacochoerus aethiopicus</name>
    <name type="common">Warthog</name>
    <dbReference type="NCBI Taxonomy" id="85517"/>
</organismHost>
<organismHost>
    <name type="scientific">Phacochoerus africanus</name>
    <name type="common">Warthog</name>
    <dbReference type="NCBI Taxonomy" id="41426"/>
</organismHost>
<organismHost>
    <name type="scientific">Potamochoerus larvatus</name>
    <name type="common">Bushpig</name>
    <dbReference type="NCBI Taxonomy" id="273792"/>
</organismHost>
<organismHost>
    <name type="scientific">Sus scrofa</name>
    <name type="common">Pig</name>
    <dbReference type="NCBI Taxonomy" id="9823"/>
</organismHost>
<protein>
    <recommendedName>
        <fullName>Transmembrane protein EP84R</fullName>
        <shortName>pEP84R</shortName>
    </recommendedName>
</protein>
<comment type="subcellular location">
    <subcellularLocation>
        <location evidence="1">Virion membrane</location>
    </subcellularLocation>
</comment>
<comment type="induction">
    <text evidence="1">Expressed in the late phase of the viral replicative cycle.</text>
</comment>
<comment type="similarity">
    <text evidence="3">Belongs to the asfivirus EP84R family.</text>
</comment>
<evidence type="ECO:0000250" key="1">
    <source>
        <dbReference type="UniProtKB" id="Q07383"/>
    </source>
</evidence>
<evidence type="ECO:0000255" key="2"/>
<evidence type="ECO:0000305" key="3"/>
<sequence>MPYSRDITKFITATEPEVGLPLLALQRSKSIIGVILLVISLLFIFIGIIILSVSSYTTTGSIFVVLSLILGGGGFFLIYKDNS</sequence>
<accession>P0CAL5</accession>
<feature type="chain" id="PRO_0000373746" description="Transmembrane protein EP84R">
    <location>
        <begin position="1"/>
        <end position="83"/>
    </location>
</feature>
<feature type="transmembrane region" description="Helical" evidence="2">
    <location>
        <begin position="31"/>
        <end position="51"/>
    </location>
</feature>
<feature type="transmembrane region" description="Helical" evidence="2">
    <location>
        <begin position="59"/>
        <end position="79"/>
    </location>
</feature>
<keyword id="KW-0426">Late protein</keyword>
<keyword id="KW-0472">Membrane</keyword>
<keyword id="KW-0812">Transmembrane</keyword>
<keyword id="KW-1133">Transmembrane helix</keyword>
<keyword id="KW-0946">Virion</keyword>
<gene>
    <name type="ordered locus">Mal-062</name>
</gene>
<reference key="1">
    <citation type="submission" date="2003-03" db="EMBL/GenBank/DDBJ databases">
        <title>African swine fever virus genomes.</title>
        <authorList>
            <person name="Kutish G.F."/>
            <person name="Rock D.L."/>
        </authorList>
    </citation>
    <scope>NUCLEOTIDE SEQUENCE [LARGE SCALE GENOMIC DNA]</scope>
</reference>
<proteinExistence type="inferred from homology"/>
<organism>
    <name type="scientific">African swine fever virus (isolate Tick/Malawi/Lil 20-1/1983)</name>
    <name type="common">ASFV</name>
    <dbReference type="NCBI Taxonomy" id="10500"/>
    <lineage>
        <taxon>Viruses</taxon>
        <taxon>Varidnaviria</taxon>
        <taxon>Bamfordvirae</taxon>
        <taxon>Nucleocytoviricota</taxon>
        <taxon>Pokkesviricetes</taxon>
        <taxon>Asfuvirales</taxon>
        <taxon>Asfarviridae</taxon>
        <taxon>Asfivirus</taxon>
        <taxon>African swine fever virus</taxon>
    </lineage>
</organism>
<dbReference type="EMBL" id="AY261361">
    <property type="status" value="NOT_ANNOTATED_CDS"/>
    <property type="molecule type" value="Genomic_DNA"/>
</dbReference>
<dbReference type="SMR" id="P0CAL5"/>
<dbReference type="Proteomes" id="UP000000860">
    <property type="component" value="Segment"/>
</dbReference>
<dbReference type="GO" id="GO:0016020">
    <property type="term" value="C:membrane"/>
    <property type="evidence" value="ECO:0007669"/>
    <property type="project" value="UniProtKB-KW"/>
</dbReference>
<dbReference type="GO" id="GO:0055036">
    <property type="term" value="C:virion membrane"/>
    <property type="evidence" value="ECO:0007669"/>
    <property type="project" value="UniProtKB-SubCell"/>
</dbReference>